<reference key="1">
    <citation type="journal article" date="1991" name="J. Gen. Microbiol.">
        <title>Molecular cloning and characterization of the aroD gene encoding 3-dehydroquinase from Salmonella typhi.</title>
        <authorList>
            <person name="Servos S."/>
            <person name="Chatfield S."/>
            <person name="Hone D."/>
            <person name="Levine M."/>
            <person name="Dimitriadis G."/>
            <person name="Pickard D."/>
            <person name="Dougan G."/>
            <person name="Fairweather N."/>
            <person name="Charles I.G."/>
        </authorList>
    </citation>
    <scope>NUCLEOTIDE SEQUENCE [GENOMIC DNA]</scope>
    <source>
        <strain>ATCC 700931 / Ty2</strain>
    </source>
</reference>
<reference key="2">
    <citation type="journal article" date="2001" name="Nature">
        <title>Complete genome sequence of a multiple drug resistant Salmonella enterica serovar Typhi CT18.</title>
        <authorList>
            <person name="Parkhill J."/>
            <person name="Dougan G."/>
            <person name="James K.D."/>
            <person name="Thomson N.R."/>
            <person name="Pickard D."/>
            <person name="Wain J."/>
            <person name="Churcher C.M."/>
            <person name="Mungall K.L."/>
            <person name="Bentley S.D."/>
            <person name="Holden M.T.G."/>
            <person name="Sebaihia M."/>
            <person name="Baker S."/>
            <person name="Basham D."/>
            <person name="Brooks K."/>
            <person name="Chillingworth T."/>
            <person name="Connerton P."/>
            <person name="Cronin A."/>
            <person name="Davis P."/>
            <person name="Davies R.M."/>
            <person name="Dowd L."/>
            <person name="White N."/>
            <person name="Farrar J."/>
            <person name="Feltwell T."/>
            <person name="Hamlin N."/>
            <person name="Haque A."/>
            <person name="Hien T.T."/>
            <person name="Holroyd S."/>
            <person name="Jagels K."/>
            <person name="Krogh A."/>
            <person name="Larsen T.S."/>
            <person name="Leather S."/>
            <person name="Moule S."/>
            <person name="O'Gaora P."/>
            <person name="Parry C."/>
            <person name="Quail M.A."/>
            <person name="Rutherford K.M."/>
            <person name="Simmonds M."/>
            <person name="Skelton J."/>
            <person name="Stevens K."/>
            <person name="Whitehead S."/>
            <person name="Barrell B.G."/>
        </authorList>
    </citation>
    <scope>NUCLEOTIDE SEQUENCE [LARGE SCALE GENOMIC DNA]</scope>
    <source>
        <strain>CT18</strain>
    </source>
</reference>
<reference key="3">
    <citation type="journal article" date="2003" name="J. Bacteriol.">
        <title>Comparative genomics of Salmonella enterica serovar Typhi strains Ty2 and CT18.</title>
        <authorList>
            <person name="Deng W."/>
            <person name="Liou S.-R."/>
            <person name="Plunkett G. III"/>
            <person name="Mayhew G.F."/>
            <person name="Rose D.J."/>
            <person name="Burland V."/>
            <person name="Kodoyianni V."/>
            <person name="Schwartz D.C."/>
            <person name="Blattner F.R."/>
        </authorList>
    </citation>
    <scope>NUCLEOTIDE SEQUENCE [LARGE SCALE GENOMIC DNA]</scope>
    <source>
        <strain>ATCC 700931 / Ty2</strain>
    </source>
</reference>
<reference key="4">
    <citation type="journal article" date="1999" name="Nat. Struct. Biol.">
        <title>The two types of 3-dehydroquinase have distinct structures but catalyze the same overall reaction.</title>
        <authorList>
            <person name="Gourley D.G."/>
            <person name="Shrive A.K."/>
            <person name="Polikarpov I."/>
            <person name="Krell T."/>
            <person name="Coggins J.R."/>
            <person name="Hawkins A.R."/>
            <person name="Isaacs N.W."/>
            <person name="Sawyer L."/>
        </authorList>
    </citation>
    <scope>X-RAY CRYSTALLOGRAPHY (2.10 ANGSTROMS) IN COMPLEX WITH 3-DEHYDROQUINATE</scope>
    <scope>SUBUNIT</scope>
    <scope>ACTIVE SITE</scope>
</reference>
<reference key="5">
    <citation type="journal article" date="2002" name="Acta Crystallogr. D">
        <title>Comparison of different crystal forms of 3-dehydroquinase from Salmonella typhi and its implication for the enzyme activity.</title>
        <authorList>
            <person name="Lee W.H."/>
            <person name="Perles L.A."/>
            <person name="Nagem R.A."/>
            <person name="Shrive A.K."/>
            <person name="Hawkins A."/>
            <person name="Sawyer L."/>
            <person name="Polikarpov I."/>
        </authorList>
    </citation>
    <scope>X-RAY CRYSTALLOGRAPHY (1.78 ANGSTROMS) IN COMPLEX WITH 3-DEHYDROSHIKIMATE</scope>
    <scope>ACTIVE SITE</scope>
    <scope>SUBUNIT</scope>
</reference>
<reference key="6">
    <citation type="journal article" date="2014" name="Biochem. J.">
        <title>Insights into substrate binding and catalysis in bacterial type I dehydroquinase.</title>
        <authorList>
            <person name="Maneiro M."/>
            <person name="Peon A."/>
            <person name="Lence E."/>
            <person name="Otero J.M."/>
            <person name="Van Raaij M.J."/>
            <person name="Thompson P."/>
            <person name="Hawkins A.R."/>
            <person name="Gonzalez-Bello C."/>
        </authorList>
    </citation>
    <scope>X-RAY CRYSTALLOGRAPHY (1.50 ANGSTROMS) IN COMPLEX WITH SUBSTRATE ANALOG</scope>
    <scope>FUNCTION</scope>
    <scope>CATALYTIC ACTIVITY</scope>
    <scope>BIOPHYSICOCHEMICAL PROPERTIES</scope>
    <scope>ACTIVITY REGULATION</scope>
    <scope>SUBUNIT</scope>
</reference>
<dbReference type="EC" id="4.2.1.10" evidence="1 4"/>
<dbReference type="EMBL" id="X54546">
    <property type="protein sequence ID" value="CAA38418.1"/>
    <property type="molecule type" value="Genomic_DNA"/>
</dbReference>
<dbReference type="EMBL" id="AL513382">
    <property type="protein sequence ID" value="CAD02002.1"/>
    <property type="molecule type" value="Genomic_DNA"/>
</dbReference>
<dbReference type="EMBL" id="AE014613">
    <property type="protein sequence ID" value="AAO68886.1"/>
    <property type="molecule type" value="Genomic_DNA"/>
</dbReference>
<dbReference type="PIR" id="S15652">
    <property type="entry name" value="S15652"/>
</dbReference>
<dbReference type="RefSeq" id="NP_456161.1">
    <property type="nucleotide sequence ID" value="NC_003198.1"/>
</dbReference>
<dbReference type="RefSeq" id="WP_000860215.1">
    <property type="nucleotide sequence ID" value="NZ_WSUR01000011.1"/>
</dbReference>
<dbReference type="PDB" id="1GQN">
    <property type="method" value="X-ray"/>
    <property type="resolution" value="1.78 A"/>
    <property type="chains" value="A=1-252"/>
</dbReference>
<dbReference type="PDB" id="1L9W">
    <property type="method" value="X-ray"/>
    <property type="resolution" value="2.10 A"/>
    <property type="chains" value="A/B/C/D=1-252"/>
</dbReference>
<dbReference type="PDB" id="1QFE">
    <property type="method" value="X-ray"/>
    <property type="resolution" value="2.10 A"/>
    <property type="chains" value="A/B=1-252"/>
</dbReference>
<dbReference type="PDB" id="4CLM">
    <property type="method" value="X-ray"/>
    <property type="resolution" value="1.40 A"/>
    <property type="chains" value="A/B=1-252"/>
</dbReference>
<dbReference type="PDB" id="4CNN">
    <property type="method" value="X-ray"/>
    <property type="resolution" value="1.00 A"/>
    <property type="chains" value="A/B=1-252"/>
</dbReference>
<dbReference type="PDB" id="4CNO">
    <property type="method" value="X-ray"/>
    <property type="resolution" value="1.50 A"/>
    <property type="chains" value="A/B/C/D=1-252"/>
</dbReference>
<dbReference type="PDB" id="4CNP">
    <property type="method" value="X-ray"/>
    <property type="resolution" value="1.15 A"/>
    <property type="chains" value="A/B=1-252"/>
</dbReference>
<dbReference type="PDB" id="4UIO">
    <property type="method" value="X-ray"/>
    <property type="resolution" value="1.35 A"/>
    <property type="chains" value="A=1-252"/>
</dbReference>
<dbReference type="PDB" id="6H5C">
    <property type="method" value="X-ray"/>
    <property type="resolution" value="1.14 A"/>
    <property type="chains" value="A/B=1-252"/>
</dbReference>
<dbReference type="PDB" id="6H5D">
    <property type="method" value="X-ray"/>
    <property type="resolution" value="1.25 A"/>
    <property type="chains" value="A/B=1-252"/>
</dbReference>
<dbReference type="PDB" id="6H5G">
    <property type="method" value="X-ray"/>
    <property type="resolution" value="1.04 A"/>
    <property type="chains" value="A=1-252"/>
</dbReference>
<dbReference type="PDB" id="6H5J">
    <property type="method" value="X-ray"/>
    <property type="resolution" value="1.40 A"/>
    <property type="chains" value="A=1-252"/>
</dbReference>
<dbReference type="PDB" id="6SFE">
    <property type="method" value="X-ray"/>
    <property type="resolution" value="1.08 A"/>
    <property type="chains" value="A/B=1-252"/>
</dbReference>
<dbReference type="PDB" id="6SFG">
    <property type="method" value="X-ray"/>
    <property type="resolution" value="1.23 A"/>
    <property type="chains" value="A=1-252"/>
</dbReference>
<dbReference type="PDB" id="8B2B">
    <property type="method" value="X-ray"/>
    <property type="resolution" value="1.90 A"/>
    <property type="chains" value="AAA/BBB=1-252"/>
</dbReference>
<dbReference type="PDB" id="8B2C">
    <property type="method" value="X-ray"/>
    <property type="resolution" value="1.55 A"/>
    <property type="chains" value="AAA=1-252"/>
</dbReference>
<dbReference type="PDBsum" id="1GQN"/>
<dbReference type="PDBsum" id="1L9W"/>
<dbReference type="PDBsum" id="1QFE"/>
<dbReference type="PDBsum" id="4CLM"/>
<dbReference type="PDBsum" id="4CNN"/>
<dbReference type="PDBsum" id="4CNO"/>
<dbReference type="PDBsum" id="4CNP"/>
<dbReference type="PDBsum" id="4UIO"/>
<dbReference type="PDBsum" id="6H5C"/>
<dbReference type="PDBsum" id="6H5D"/>
<dbReference type="PDBsum" id="6H5G"/>
<dbReference type="PDBsum" id="6H5J"/>
<dbReference type="PDBsum" id="6SFE"/>
<dbReference type="PDBsum" id="6SFG"/>
<dbReference type="PDBsum" id="8B2B"/>
<dbReference type="PDBsum" id="8B2C"/>
<dbReference type="PCDDB" id="P24670"/>
<dbReference type="SMR" id="P24670"/>
<dbReference type="STRING" id="220341.gene:17585694"/>
<dbReference type="DrugBank" id="DB03746">
    <property type="generic name" value="3-Amino-4,5-Dihydroxy-Cyclohex-1-Enecarboxylate"/>
</dbReference>
<dbReference type="KEGG" id="stt:t1231"/>
<dbReference type="KEGG" id="sty:STY1760"/>
<dbReference type="PATRIC" id="fig|220341.7.peg.1771"/>
<dbReference type="eggNOG" id="COG0710">
    <property type="taxonomic scope" value="Bacteria"/>
</dbReference>
<dbReference type="HOGENOM" id="CLU_064444_0_0_6"/>
<dbReference type="OMA" id="ATMAMGE"/>
<dbReference type="OrthoDB" id="9813659at2"/>
<dbReference type="BRENDA" id="4.2.1.10">
    <property type="organism ID" value="5557"/>
</dbReference>
<dbReference type="SABIO-RK" id="P24670"/>
<dbReference type="UniPathway" id="UPA00053">
    <property type="reaction ID" value="UER00086"/>
</dbReference>
<dbReference type="EvolutionaryTrace" id="P24670"/>
<dbReference type="Proteomes" id="UP000000541">
    <property type="component" value="Chromosome"/>
</dbReference>
<dbReference type="Proteomes" id="UP000002670">
    <property type="component" value="Chromosome"/>
</dbReference>
<dbReference type="GO" id="GO:0003855">
    <property type="term" value="F:3-dehydroquinate dehydratase activity"/>
    <property type="evidence" value="ECO:0000314"/>
    <property type="project" value="UniProtKB"/>
</dbReference>
<dbReference type="GO" id="GO:0046279">
    <property type="term" value="P:3,4-dihydroxybenzoate biosynthetic process"/>
    <property type="evidence" value="ECO:0000314"/>
    <property type="project" value="UniProtKB"/>
</dbReference>
<dbReference type="GO" id="GO:0008652">
    <property type="term" value="P:amino acid biosynthetic process"/>
    <property type="evidence" value="ECO:0007669"/>
    <property type="project" value="UniProtKB-KW"/>
</dbReference>
<dbReference type="GO" id="GO:0009073">
    <property type="term" value="P:aromatic amino acid family biosynthetic process"/>
    <property type="evidence" value="ECO:0007669"/>
    <property type="project" value="UniProtKB-KW"/>
</dbReference>
<dbReference type="GO" id="GO:0009423">
    <property type="term" value="P:chorismate biosynthetic process"/>
    <property type="evidence" value="ECO:0007669"/>
    <property type="project" value="UniProtKB-UniRule"/>
</dbReference>
<dbReference type="CDD" id="cd00502">
    <property type="entry name" value="DHQase_I"/>
    <property type="match status" value="1"/>
</dbReference>
<dbReference type="FunFam" id="3.20.20.70:FF:000047">
    <property type="entry name" value="3-dehydroquinate dehydratase"/>
    <property type="match status" value="1"/>
</dbReference>
<dbReference type="Gene3D" id="3.20.20.70">
    <property type="entry name" value="Aldolase class I"/>
    <property type="match status" value="1"/>
</dbReference>
<dbReference type="HAMAP" id="MF_00214">
    <property type="entry name" value="AroD"/>
    <property type="match status" value="1"/>
</dbReference>
<dbReference type="InterPro" id="IPR018508">
    <property type="entry name" value="3-dehydroquinate_DH_AS"/>
</dbReference>
<dbReference type="InterPro" id="IPR013785">
    <property type="entry name" value="Aldolase_TIM"/>
</dbReference>
<dbReference type="InterPro" id="IPR001381">
    <property type="entry name" value="DHquinase_I"/>
</dbReference>
<dbReference type="InterPro" id="IPR050146">
    <property type="entry name" value="Type-I_3-dehydroquinase"/>
</dbReference>
<dbReference type="NCBIfam" id="TIGR01093">
    <property type="entry name" value="aroD"/>
    <property type="match status" value="1"/>
</dbReference>
<dbReference type="PANTHER" id="PTHR43699">
    <property type="entry name" value="3-DEHYDROQUINATE DEHYDRATASE"/>
    <property type="match status" value="1"/>
</dbReference>
<dbReference type="PANTHER" id="PTHR43699:SF1">
    <property type="entry name" value="3-DEHYDROQUINATE DEHYDRATASE"/>
    <property type="match status" value="1"/>
</dbReference>
<dbReference type="Pfam" id="PF01487">
    <property type="entry name" value="DHquinase_I"/>
    <property type="match status" value="1"/>
</dbReference>
<dbReference type="SUPFAM" id="SSF51569">
    <property type="entry name" value="Aldolase"/>
    <property type="match status" value="1"/>
</dbReference>
<dbReference type="PROSITE" id="PS01028">
    <property type="entry name" value="DEHYDROQUINASE_I"/>
    <property type="match status" value="1"/>
</dbReference>
<accession>P24670</accession>
<proteinExistence type="evidence at protein level"/>
<sequence length="252" mass="27649">MKTVTVKNLIIGEGMPKIIVSLMGRDINSVKAEALAYREATFDILEWRVDHFMDIASTQSVLTAARVIRDAMPDIPLLFTFRSAKEGGEQTITTQHYLTLNRAAIDSGLVDMIDLELFTGDADVKATVDYAHAHNVYVVMSNHDFHQTPSAEEMVLRLRKMQALGADIPKIAVMPQSKHDVLTLLTATLEMQQHYADRPVITMSMAKEGVISRLAGEVFGSAATFGAVKQASAPGQIAVNDLRSVLMILHNA</sequence>
<feature type="chain" id="PRO_0000138805" description="3-dehydroquinate dehydratase">
    <location>
        <begin position="1"/>
        <end position="252"/>
    </location>
</feature>
<feature type="active site" description="Proton donor/acceptor" evidence="1 8">
    <location>
        <position position="143"/>
    </location>
</feature>
<feature type="active site" description="Schiff-base intermediate with substrate" evidence="1 2 3">
    <location>
        <position position="170"/>
    </location>
</feature>
<feature type="binding site" evidence="1 2 3">
    <location>
        <position position="21"/>
    </location>
    <ligand>
        <name>3-dehydroquinate</name>
        <dbReference type="ChEBI" id="CHEBI:32364"/>
    </ligand>
</feature>
<feature type="binding site" evidence="1 2 3 4">
    <location>
        <begin position="46"/>
        <end position="48"/>
    </location>
    <ligand>
        <name>3-dehydroquinate</name>
        <dbReference type="ChEBI" id="CHEBI:32364"/>
    </ligand>
</feature>
<feature type="binding site" evidence="1 2">
    <location>
        <position position="82"/>
    </location>
    <ligand>
        <name>3-dehydroquinate</name>
        <dbReference type="ChEBI" id="CHEBI:32364"/>
    </ligand>
</feature>
<feature type="binding site" evidence="1 2 3 4">
    <location>
        <position position="213"/>
    </location>
    <ligand>
        <name>3-dehydroquinate</name>
        <dbReference type="ChEBI" id="CHEBI:32364"/>
    </ligand>
</feature>
<feature type="binding site" evidence="1 2 3">
    <location>
        <position position="232"/>
    </location>
    <ligand>
        <name>3-dehydroquinate</name>
        <dbReference type="ChEBI" id="CHEBI:32364"/>
    </ligand>
</feature>
<feature type="binding site" evidence="1 2 3 4">
    <location>
        <position position="236"/>
    </location>
    <ligand>
        <name>3-dehydroquinate</name>
        <dbReference type="ChEBI" id="CHEBI:32364"/>
    </ligand>
</feature>
<feature type="sequence conflict" description="In Ref. 1; CAA38418." evidence="7" ref="1">
    <original>L</original>
    <variation>S</variation>
    <location>
        <position position="156"/>
    </location>
</feature>
<feature type="strand" evidence="9">
    <location>
        <begin position="4"/>
        <end position="6"/>
    </location>
</feature>
<feature type="strand" evidence="9">
    <location>
        <begin position="9"/>
        <end position="11"/>
    </location>
</feature>
<feature type="strand" evidence="9">
    <location>
        <begin position="13"/>
        <end position="15"/>
    </location>
</feature>
<feature type="strand" evidence="9">
    <location>
        <begin position="17"/>
        <end position="22"/>
    </location>
</feature>
<feature type="helix" evidence="9">
    <location>
        <begin position="27"/>
        <end position="36"/>
    </location>
</feature>
<feature type="helix" evidence="9">
    <location>
        <begin position="37"/>
        <end position="39"/>
    </location>
</feature>
<feature type="strand" evidence="9">
    <location>
        <begin position="43"/>
        <end position="48"/>
    </location>
</feature>
<feature type="helix" evidence="9">
    <location>
        <begin position="49"/>
        <end position="51"/>
    </location>
</feature>
<feature type="turn" evidence="10">
    <location>
        <begin position="53"/>
        <end position="56"/>
    </location>
</feature>
<feature type="helix" evidence="9">
    <location>
        <begin position="58"/>
        <end position="71"/>
    </location>
</feature>
<feature type="strand" evidence="10">
    <location>
        <begin position="73"/>
        <end position="75"/>
    </location>
</feature>
<feature type="strand" evidence="9">
    <location>
        <begin position="77"/>
        <end position="80"/>
    </location>
</feature>
<feature type="helix" evidence="9">
    <location>
        <begin position="84"/>
        <end position="86"/>
    </location>
</feature>
<feature type="helix" evidence="9">
    <location>
        <begin position="94"/>
        <end position="106"/>
    </location>
</feature>
<feature type="strand" evidence="9">
    <location>
        <begin position="111"/>
        <end position="116"/>
    </location>
</feature>
<feature type="helix" evidence="9">
    <location>
        <begin position="117"/>
        <end position="119"/>
    </location>
</feature>
<feature type="helix" evidence="9">
    <location>
        <begin position="121"/>
        <end position="133"/>
    </location>
</feature>
<feature type="strand" evidence="9">
    <location>
        <begin position="137"/>
        <end position="146"/>
    </location>
</feature>
<feature type="helix" evidence="9">
    <location>
        <begin position="151"/>
        <end position="163"/>
    </location>
</feature>
<feature type="strand" evidence="9">
    <location>
        <begin position="167"/>
        <end position="173"/>
    </location>
</feature>
<feature type="helix" evidence="9">
    <location>
        <begin position="178"/>
        <end position="194"/>
    </location>
</feature>
<feature type="strand" evidence="9">
    <location>
        <begin position="201"/>
        <end position="204"/>
    </location>
</feature>
<feature type="turn" evidence="9">
    <location>
        <begin position="206"/>
        <end position="210"/>
    </location>
</feature>
<feature type="helix" evidence="9">
    <location>
        <begin position="211"/>
        <end position="214"/>
    </location>
</feature>
<feature type="helix" evidence="9">
    <location>
        <begin position="216"/>
        <end position="219"/>
    </location>
</feature>
<feature type="strand" evidence="9">
    <location>
        <begin position="223"/>
        <end position="225"/>
    </location>
</feature>
<feature type="strand" evidence="11">
    <location>
        <begin position="227"/>
        <end position="230"/>
    </location>
</feature>
<feature type="helix" evidence="9">
    <location>
        <begin position="239"/>
        <end position="251"/>
    </location>
</feature>
<protein>
    <recommendedName>
        <fullName evidence="1 5">3-dehydroquinate dehydratase</fullName>
        <shortName evidence="1 5">3-dehydroquinase</shortName>
        <ecNumber evidence="1 4">4.2.1.10</ecNumber>
    </recommendedName>
    <alternativeName>
        <fullName evidence="1">Type I DHQase</fullName>
    </alternativeName>
    <alternativeName>
        <fullName evidence="1 6">Type I dehydroquinase</fullName>
        <shortName evidence="1 6">DHQ1</shortName>
    </alternativeName>
</protein>
<gene>
    <name evidence="1 5" type="primary">aroD</name>
    <name type="ordered locus">STY1760</name>
    <name type="ordered locus">t1231</name>
</gene>
<keyword id="KW-0002">3D-structure</keyword>
<keyword id="KW-0028">Amino-acid biosynthesis</keyword>
<keyword id="KW-0057">Aromatic amino acid biosynthesis</keyword>
<keyword id="KW-0456">Lyase</keyword>
<keyword id="KW-0704">Schiff base</keyword>
<evidence type="ECO:0000255" key="1">
    <source>
        <dbReference type="HAMAP-Rule" id="MF_00214"/>
    </source>
</evidence>
<evidence type="ECO:0000269" key="2">
    <source>
    </source>
</evidence>
<evidence type="ECO:0000269" key="3">
    <source>
    </source>
</evidence>
<evidence type="ECO:0000269" key="4">
    <source>
    </source>
</evidence>
<evidence type="ECO:0000303" key="5">
    <source>
    </source>
</evidence>
<evidence type="ECO:0000303" key="6">
    <source>
    </source>
</evidence>
<evidence type="ECO:0000305" key="7"/>
<evidence type="ECO:0000305" key="8">
    <source>
    </source>
</evidence>
<evidence type="ECO:0007829" key="9">
    <source>
        <dbReference type="PDB" id="4CNN"/>
    </source>
</evidence>
<evidence type="ECO:0007829" key="10">
    <source>
        <dbReference type="PDB" id="6H5C"/>
    </source>
</evidence>
<evidence type="ECO:0007829" key="11">
    <source>
        <dbReference type="PDB" id="6SFE"/>
    </source>
</evidence>
<comment type="function">
    <text evidence="1 4">Involved in the third step of the chorismate pathway, which leads to the biosynthesis of aromatic amino acids. Catalyzes the cis-dehydration of 3-dehydroquinate (DHQ) and introduces the first double bond of the aromatic ring to yield 3-dehydroshikimate. The reaction involves the formation of an imine intermediate between the keto group of 3-dehydroquinate and the epsilon-amino group of Lys-170 at the active site.</text>
</comment>
<comment type="catalytic activity">
    <reaction evidence="1 4">
        <text>3-dehydroquinate = 3-dehydroshikimate + H2O</text>
        <dbReference type="Rhea" id="RHEA:21096"/>
        <dbReference type="ChEBI" id="CHEBI:15377"/>
        <dbReference type="ChEBI" id="CHEBI:16630"/>
        <dbReference type="ChEBI" id="CHEBI:32364"/>
        <dbReference type="EC" id="4.2.1.10"/>
    </reaction>
</comment>
<comment type="activity regulation">
    <text evidence="4">Inhibited by (2R)-2-methyl-3-dehydroquinic acid.</text>
</comment>
<comment type="biophysicochemical properties">
    <kinetics>
        <KM evidence="4">24 uM for 3-dehydroquinate (at pH 7.2 and 25 degrees Celsius)</KM>
        <text evidence="4">kcat is 1.1 sec(-1) for dehydratase activity with 3-dehydroquinate (at pH 7.2 and 25 degrees Celsius).</text>
    </kinetics>
</comment>
<comment type="pathway">
    <text evidence="1">Metabolic intermediate biosynthesis; chorismate biosynthesis; chorismate from D-erythrose 4-phosphate and phosphoenolpyruvate: step 3/7.</text>
</comment>
<comment type="subunit">
    <text evidence="1 2 3 4">Dimer of dimers.</text>
</comment>
<comment type="similarity">
    <text evidence="1">Belongs to the type-I 3-dehydroquinase family.</text>
</comment>
<name>AROD_SALTI</name>
<organism>
    <name type="scientific">Salmonella typhi</name>
    <dbReference type="NCBI Taxonomy" id="90370"/>
    <lineage>
        <taxon>Bacteria</taxon>
        <taxon>Pseudomonadati</taxon>
        <taxon>Pseudomonadota</taxon>
        <taxon>Gammaproteobacteria</taxon>
        <taxon>Enterobacterales</taxon>
        <taxon>Enterobacteriaceae</taxon>
        <taxon>Salmonella</taxon>
    </lineage>
</organism>